<accession>O27945</accession>
<feature type="chain" id="PRO_0000128140" description="Uncharacterized protein AF_2339">
    <location>
        <begin position="1"/>
        <end position="76"/>
    </location>
</feature>
<keyword id="KW-1185">Reference proteome</keyword>
<proteinExistence type="predicted"/>
<dbReference type="EMBL" id="AE000782">
    <property type="protein sequence ID" value="AAB88929.1"/>
    <property type="molecule type" value="Genomic_DNA"/>
</dbReference>
<dbReference type="PIR" id="C69542">
    <property type="entry name" value="C69542"/>
</dbReference>
<dbReference type="RefSeq" id="WP_010879828.1">
    <property type="nucleotide sequence ID" value="NC_000917.1"/>
</dbReference>
<dbReference type="STRING" id="224325.AF_2339"/>
<dbReference type="PaxDb" id="224325-AF_2339"/>
<dbReference type="EnsemblBacteria" id="AAB88929">
    <property type="protein sequence ID" value="AAB88929"/>
    <property type="gene ID" value="AF_2339"/>
</dbReference>
<dbReference type="GeneID" id="1485572"/>
<dbReference type="KEGG" id="afu:AF_2339"/>
<dbReference type="eggNOG" id="arCOG00888">
    <property type="taxonomic scope" value="Archaea"/>
</dbReference>
<dbReference type="HOGENOM" id="CLU_2645663_0_0_2"/>
<dbReference type="Proteomes" id="UP000002199">
    <property type="component" value="Chromosome"/>
</dbReference>
<name>Y2339_ARCFU</name>
<protein>
    <recommendedName>
        <fullName>Uncharacterized protein AF_2339</fullName>
    </recommendedName>
</protein>
<sequence>MEEIFFGRIGMYEDFQRTRGILQIMARVIVNLLRHAEEIPETTMFISAGEIDLSYPELMRKLTDRIFGANLIRLFK</sequence>
<organism>
    <name type="scientific">Archaeoglobus fulgidus (strain ATCC 49558 / DSM 4304 / JCM 9628 / NBRC 100126 / VC-16)</name>
    <dbReference type="NCBI Taxonomy" id="224325"/>
    <lineage>
        <taxon>Archaea</taxon>
        <taxon>Methanobacteriati</taxon>
        <taxon>Methanobacteriota</taxon>
        <taxon>Archaeoglobi</taxon>
        <taxon>Archaeoglobales</taxon>
        <taxon>Archaeoglobaceae</taxon>
        <taxon>Archaeoglobus</taxon>
    </lineage>
</organism>
<reference key="1">
    <citation type="journal article" date="1997" name="Nature">
        <title>The complete genome sequence of the hyperthermophilic, sulphate-reducing archaeon Archaeoglobus fulgidus.</title>
        <authorList>
            <person name="Klenk H.-P."/>
            <person name="Clayton R.A."/>
            <person name="Tomb J.-F."/>
            <person name="White O."/>
            <person name="Nelson K.E."/>
            <person name="Ketchum K.A."/>
            <person name="Dodson R.J."/>
            <person name="Gwinn M.L."/>
            <person name="Hickey E.K."/>
            <person name="Peterson J.D."/>
            <person name="Richardson D.L."/>
            <person name="Kerlavage A.R."/>
            <person name="Graham D.E."/>
            <person name="Kyrpides N.C."/>
            <person name="Fleischmann R.D."/>
            <person name="Quackenbush J."/>
            <person name="Lee N.H."/>
            <person name="Sutton G.G."/>
            <person name="Gill S.R."/>
            <person name="Kirkness E.F."/>
            <person name="Dougherty B.A."/>
            <person name="McKenney K."/>
            <person name="Adams M.D."/>
            <person name="Loftus B.J."/>
            <person name="Peterson S.N."/>
            <person name="Reich C.I."/>
            <person name="McNeil L.K."/>
            <person name="Badger J.H."/>
            <person name="Glodek A."/>
            <person name="Zhou L."/>
            <person name="Overbeek R."/>
            <person name="Gocayne J.D."/>
            <person name="Weidman J.F."/>
            <person name="McDonald L.A."/>
            <person name="Utterback T.R."/>
            <person name="Cotton M.D."/>
            <person name="Spriggs T."/>
            <person name="Artiach P."/>
            <person name="Kaine B.P."/>
            <person name="Sykes S.M."/>
            <person name="Sadow P.W."/>
            <person name="D'Andrea K.P."/>
            <person name="Bowman C."/>
            <person name="Fujii C."/>
            <person name="Garland S.A."/>
            <person name="Mason T.M."/>
            <person name="Olsen G.J."/>
            <person name="Fraser C.M."/>
            <person name="Smith H.O."/>
            <person name="Woese C.R."/>
            <person name="Venter J.C."/>
        </authorList>
    </citation>
    <scope>NUCLEOTIDE SEQUENCE [LARGE SCALE GENOMIC DNA]</scope>
    <source>
        <strain>ATCC 49558 / DSM 4304 / JCM 9628 / NBRC 100126 / VC-16</strain>
    </source>
</reference>
<gene>
    <name type="ordered locus">AF_2339</name>
</gene>